<organism>
    <name type="scientific">Saccharomyces cerevisiae (strain RM11-1a)</name>
    <name type="common">Baker's yeast</name>
    <dbReference type="NCBI Taxonomy" id="285006"/>
    <lineage>
        <taxon>Eukaryota</taxon>
        <taxon>Fungi</taxon>
        <taxon>Dikarya</taxon>
        <taxon>Ascomycota</taxon>
        <taxon>Saccharomycotina</taxon>
        <taxon>Saccharomycetes</taxon>
        <taxon>Saccharomycetales</taxon>
        <taxon>Saccharomycetaceae</taxon>
        <taxon>Saccharomyces</taxon>
    </lineage>
</organism>
<name>COXM1_YEAS1</name>
<evidence type="ECO:0000250" key="1"/>
<evidence type="ECO:0000255" key="2">
    <source>
        <dbReference type="PROSITE-ProRule" id="PRU01150"/>
    </source>
</evidence>
<evidence type="ECO:0000305" key="3"/>
<feature type="chain" id="PRO_0000377671" description="COX assembly mitochondrial protein">
    <location>
        <begin position="1"/>
        <end position="111"/>
    </location>
</feature>
<feature type="domain" description="CHCH" evidence="2">
    <location>
        <begin position="39"/>
        <end position="82"/>
    </location>
</feature>
<feature type="short sequence motif" description="Cx9C motif 1" evidence="2">
    <location>
        <begin position="42"/>
        <end position="52"/>
    </location>
</feature>
<feature type="short sequence motif" description="Cx9C motif 2" evidence="2">
    <location>
        <begin position="64"/>
        <end position="74"/>
    </location>
</feature>
<feature type="disulfide bond" evidence="2">
    <location>
        <begin position="42"/>
        <end position="74"/>
    </location>
</feature>
<feature type="disulfide bond" evidence="2">
    <location>
        <begin position="52"/>
        <end position="64"/>
    </location>
</feature>
<comment type="function">
    <text evidence="1">Required for mitochondrial cytochrome c oxidase (COX) assembly and respiration. Binds copper. May be involved in copper trafficking and distribution to mitochondrial COX and SOD1 (By similarity).</text>
</comment>
<comment type="subcellular location">
    <subcellularLocation>
        <location evidence="1">Mitochondrion inner membrane</location>
        <topology evidence="1">Peripheral membrane protein</topology>
        <orientation evidence="1">Intermembrane side</orientation>
    </subcellularLocation>
</comment>
<comment type="similarity">
    <text evidence="3">Belongs to the CMC family.</text>
</comment>
<comment type="sequence caution" evidence="3">
    <conflict type="erroneous initiation">
        <sequence resource="EMBL-CDS" id="EDV12967"/>
    </conflict>
</comment>
<gene>
    <name type="primary">CMC1</name>
    <name type="ORF">SCRG_03889</name>
</gene>
<proteinExistence type="inferred from homology"/>
<accession>B3LQW4</accession>
<dbReference type="EMBL" id="CH408051">
    <property type="protein sequence ID" value="EDV12967.1"/>
    <property type="status" value="ALT_INIT"/>
    <property type="molecule type" value="Genomic_DNA"/>
</dbReference>
<dbReference type="HOGENOM" id="CLU_147575_0_0_1"/>
<dbReference type="OrthoDB" id="11133at4893"/>
<dbReference type="Proteomes" id="UP000008335">
    <property type="component" value="Unassembled WGS sequence"/>
</dbReference>
<dbReference type="GO" id="GO:0005743">
    <property type="term" value="C:mitochondrial inner membrane"/>
    <property type="evidence" value="ECO:0007669"/>
    <property type="project" value="UniProtKB-SubCell"/>
</dbReference>
<dbReference type="GO" id="GO:0046872">
    <property type="term" value="F:metal ion binding"/>
    <property type="evidence" value="ECO:0007669"/>
    <property type="project" value="UniProtKB-KW"/>
</dbReference>
<dbReference type="InterPro" id="IPR013892">
    <property type="entry name" value="Cyt_c_biogenesis_Cmc1-like"/>
</dbReference>
<dbReference type="Pfam" id="PF08583">
    <property type="entry name" value="Cmc1"/>
    <property type="match status" value="1"/>
</dbReference>
<dbReference type="PROSITE" id="PS51808">
    <property type="entry name" value="CHCH"/>
    <property type="match status" value="1"/>
</dbReference>
<reference key="1">
    <citation type="submission" date="2005-03" db="EMBL/GenBank/DDBJ databases">
        <title>Annotation of the Saccharomyces cerevisiae RM11-1a genome.</title>
        <authorList>
            <consortium name="The Broad Institute Genome Sequencing Platform"/>
            <person name="Birren B.W."/>
            <person name="Lander E.S."/>
            <person name="Galagan J.E."/>
            <person name="Nusbaum C."/>
            <person name="Devon K."/>
            <person name="Cuomo C."/>
            <person name="Jaffe D.B."/>
            <person name="Butler J."/>
            <person name="Alvarez P."/>
            <person name="Gnerre S."/>
            <person name="Grabherr M."/>
            <person name="Kleber M."/>
            <person name="Mauceli E.W."/>
            <person name="Brockman W."/>
            <person name="MacCallum I.A."/>
            <person name="Rounsley S."/>
            <person name="Young S.K."/>
            <person name="LaButti K."/>
            <person name="Pushparaj V."/>
            <person name="DeCaprio D."/>
            <person name="Crawford M."/>
            <person name="Koehrsen M."/>
            <person name="Engels R."/>
            <person name="Montgomery P."/>
            <person name="Pearson M."/>
            <person name="Howarth C."/>
            <person name="Larson L."/>
            <person name="Luoma S."/>
            <person name="White J."/>
            <person name="O'Leary S."/>
            <person name="Kodira C.D."/>
            <person name="Zeng Q."/>
            <person name="Yandava C."/>
            <person name="Alvarado L."/>
            <person name="Pratt S."/>
            <person name="Kruglyak L."/>
        </authorList>
    </citation>
    <scope>NUCLEOTIDE SEQUENCE [LARGE SCALE GENOMIC DNA]</scope>
    <source>
        <strain>RM11-1a</strain>
    </source>
</reference>
<keyword id="KW-0143">Chaperone</keyword>
<keyword id="KW-0186">Copper</keyword>
<keyword id="KW-1015">Disulfide bond</keyword>
<keyword id="KW-0472">Membrane</keyword>
<keyword id="KW-0479">Metal-binding</keyword>
<keyword id="KW-0496">Mitochondrion</keyword>
<keyword id="KW-0999">Mitochondrion inner membrane</keyword>
<sequence length="111" mass="13034">MEQNKDPQMISKHNSRLPIWVLSPREEQQARKNLKTETYKKCANFVQAMADCAKANGMKVFPTCDKQRDEMKSCLLFYQTDEKYLDGERDKIVLEKINKLEKLCQKQSSTK</sequence>
<protein>
    <recommendedName>
        <fullName>COX assembly mitochondrial protein</fullName>
    </recommendedName>
    <alternativeName>
        <fullName>COX biogenesis factor CMC1</fullName>
    </alternativeName>
    <alternativeName>
        <fullName>Mitochondrial metallochaperone-like protein CMC1</fullName>
    </alternativeName>
</protein>